<feature type="chain" id="PRO_1000194635" description="Ribonuclease P protein component">
    <location>
        <begin position="1"/>
        <end position="119"/>
    </location>
</feature>
<evidence type="ECO:0000255" key="1">
    <source>
        <dbReference type="HAMAP-Rule" id="MF_00227"/>
    </source>
</evidence>
<organism>
    <name type="scientific">Escherichia coli (strain 55989 / EAEC)</name>
    <dbReference type="NCBI Taxonomy" id="585055"/>
    <lineage>
        <taxon>Bacteria</taxon>
        <taxon>Pseudomonadati</taxon>
        <taxon>Pseudomonadota</taxon>
        <taxon>Gammaproteobacteria</taxon>
        <taxon>Enterobacterales</taxon>
        <taxon>Enterobacteriaceae</taxon>
        <taxon>Escherichia</taxon>
    </lineage>
</organism>
<sequence>MVKLAFPRELRLLTPSQFTFVFQQPQRAGTPQITILGRLNSLGHPRIGLTVAKKNVRRAHERNRIKRLTRESFRLRQHELPAMDFVVVAKKGVADLDNRALSEALEKLWRRHCRLARGS</sequence>
<reference key="1">
    <citation type="journal article" date="2009" name="PLoS Genet.">
        <title>Organised genome dynamics in the Escherichia coli species results in highly diverse adaptive paths.</title>
        <authorList>
            <person name="Touchon M."/>
            <person name="Hoede C."/>
            <person name="Tenaillon O."/>
            <person name="Barbe V."/>
            <person name="Baeriswyl S."/>
            <person name="Bidet P."/>
            <person name="Bingen E."/>
            <person name="Bonacorsi S."/>
            <person name="Bouchier C."/>
            <person name="Bouvet O."/>
            <person name="Calteau A."/>
            <person name="Chiapello H."/>
            <person name="Clermont O."/>
            <person name="Cruveiller S."/>
            <person name="Danchin A."/>
            <person name="Diard M."/>
            <person name="Dossat C."/>
            <person name="Karoui M.E."/>
            <person name="Frapy E."/>
            <person name="Garry L."/>
            <person name="Ghigo J.M."/>
            <person name="Gilles A.M."/>
            <person name="Johnson J."/>
            <person name="Le Bouguenec C."/>
            <person name="Lescat M."/>
            <person name="Mangenot S."/>
            <person name="Martinez-Jehanne V."/>
            <person name="Matic I."/>
            <person name="Nassif X."/>
            <person name="Oztas S."/>
            <person name="Petit M.A."/>
            <person name="Pichon C."/>
            <person name="Rouy Z."/>
            <person name="Ruf C.S."/>
            <person name="Schneider D."/>
            <person name="Tourret J."/>
            <person name="Vacherie B."/>
            <person name="Vallenet D."/>
            <person name="Medigue C."/>
            <person name="Rocha E.P.C."/>
            <person name="Denamur E."/>
        </authorList>
    </citation>
    <scope>NUCLEOTIDE SEQUENCE [LARGE SCALE GENOMIC DNA]</scope>
    <source>
        <strain>55989 / EAEC</strain>
    </source>
</reference>
<keyword id="KW-0255">Endonuclease</keyword>
<keyword id="KW-0378">Hydrolase</keyword>
<keyword id="KW-0540">Nuclease</keyword>
<keyword id="KW-1185">Reference proteome</keyword>
<keyword id="KW-0694">RNA-binding</keyword>
<keyword id="KW-0819">tRNA processing</keyword>
<comment type="function">
    <text evidence="1">RNaseP catalyzes the removal of the 5'-leader sequence from pre-tRNA to produce the mature 5'-terminus. It can also cleave other RNA substrates such as 4.5S RNA. The protein component plays an auxiliary but essential role in vivo by binding to the 5'-leader sequence and broadening the substrate specificity of the ribozyme.</text>
</comment>
<comment type="catalytic activity">
    <reaction evidence="1">
        <text>Endonucleolytic cleavage of RNA, removing 5'-extranucleotides from tRNA precursor.</text>
        <dbReference type="EC" id="3.1.26.5"/>
    </reaction>
</comment>
<comment type="subunit">
    <text evidence="1">Consists of a catalytic RNA component (M1 or rnpB) and a protein subunit.</text>
</comment>
<comment type="similarity">
    <text evidence="1">Belongs to the RnpA family.</text>
</comment>
<accession>B7L844</accession>
<name>RNPA_ECO55</name>
<dbReference type="EC" id="3.1.26.5" evidence="1"/>
<dbReference type="EMBL" id="CU928145">
    <property type="protein sequence ID" value="CAV00761.1"/>
    <property type="molecule type" value="Genomic_DNA"/>
</dbReference>
<dbReference type="RefSeq" id="WP_000239730.1">
    <property type="nucleotide sequence ID" value="NZ_CP028304.1"/>
</dbReference>
<dbReference type="SMR" id="B7L844"/>
<dbReference type="GeneID" id="93778446"/>
<dbReference type="KEGG" id="eck:EC55989_4174"/>
<dbReference type="HOGENOM" id="CLU_117179_11_0_6"/>
<dbReference type="Proteomes" id="UP000000746">
    <property type="component" value="Chromosome"/>
</dbReference>
<dbReference type="GO" id="GO:0030677">
    <property type="term" value="C:ribonuclease P complex"/>
    <property type="evidence" value="ECO:0007669"/>
    <property type="project" value="TreeGrafter"/>
</dbReference>
<dbReference type="GO" id="GO:0042781">
    <property type="term" value="F:3'-tRNA processing endoribonuclease activity"/>
    <property type="evidence" value="ECO:0007669"/>
    <property type="project" value="TreeGrafter"/>
</dbReference>
<dbReference type="GO" id="GO:0004526">
    <property type="term" value="F:ribonuclease P activity"/>
    <property type="evidence" value="ECO:0007669"/>
    <property type="project" value="UniProtKB-UniRule"/>
</dbReference>
<dbReference type="GO" id="GO:0000049">
    <property type="term" value="F:tRNA binding"/>
    <property type="evidence" value="ECO:0007669"/>
    <property type="project" value="UniProtKB-UniRule"/>
</dbReference>
<dbReference type="GO" id="GO:0001682">
    <property type="term" value="P:tRNA 5'-leader removal"/>
    <property type="evidence" value="ECO:0007669"/>
    <property type="project" value="UniProtKB-UniRule"/>
</dbReference>
<dbReference type="FunFam" id="3.30.230.10:FF:000016">
    <property type="entry name" value="Ribonuclease P protein component"/>
    <property type="match status" value="1"/>
</dbReference>
<dbReference type="Gene3D" id="3.30.230.10">
    <property type="match status" value="1"/>
</dbReference>
<dbReference type="HAMAP" id="MF_00227">
    <property type="entry name" value="RNase_P"/>
    <property type="match status" value="1"/>
</dbReference>
<dbReference type="InterPro" id="IPR020568">
    <property type="entry name" value="Ribosomal_Su5_D2-typ_SF"/>
</dbReference>
<dbReference type="InterPro" id="IPR014721">
    <property type="entry name" value="Ribsml_uS5_D2-typ_fold_subgr"/>
</dbReference>
<dbReference type="InterPro" id="IPR000100">
    <property type="entry name" value="RNase_P"/>
</dbReference>
<dbReference type="InterPro" id="IPR020539">
    <property type="entry name" value="RNase_P_CS"/>
</dbReference>
<dbReference type="NCBIfam" id="TIGR00188">
    <property type="entry name" value="rnpA"/>
    <property type="match status" value="1"/>
</dbReference>
<dbReference type="PANTHER" id="PTHR33992">
    <property type="entry name" value="RIBONUCLEASE P PROTEIN COMPONENT"/>
    <property type="match status" value="1"/>
</dbReference>
<dbReference type="PANTHER" id="PTHR33992:SF1">
    <property type="entry name" value="RIBONUCLEASE P PROTEIN COMPONENT"/>
    <property type="match status" value="1"/>
</dbReference>
<dbReference type="Pfam" id="PF00825">
    <property type="entry name" value="Ribonuclease_P"/>
    <property type="match status" value="1"/>
</dbReference>
<dbReference type="SUPFAM" id="SSF54211">
    <property type="entry name" value="Ribosomal protein S5 domain 2-like"/>
    <property type="match status" value="1"/>
</dbReference>
<dbReference type="PROSITE" id="PS00648">
    <property type="entry name" value="RIBONUCLEASE_P"/>
    <property type="match status" value="1"/>
</dbReference>
<gene>
    <name evidence="1" type="primary">rnpA</name>
    <name type="ordered locus">EC55989_4174</name>
</gene>
<proteinExistence type="inferred from homology"/>
<protein>
    <recommendedName>
        <fullName evidence="1">Ribonuclease P protein component</fullName>
        <shortName evidence="1">RNase P protein</shortName>
        <shortName evidence="1">RNaseP protein</shortName>
        <ecNumber evidence="1">3.1.26.5</ecNumber>
    </recommendedName>
    <alternativeName>
        <fullName evidence="1">Protein C5</fullName>
    </alternativeName>
</protein>